<organism>
    <name type="scientific">Homo sapiens</name>
    <name type="common">Human</name>
    <dbReference type="NCBI Taxonomy" id="9606"/>
    <lineage>
        <taxon>Eukaryota</taxon>
        <taxon>Metazoa</taxon>
        <taxon>Chordata</taxon>
        <taxon>Craniata</taxon>
        <taxon>Vertebrata</taxon>
        <taxon>Euteleostomi</taxon>
        <taxon>Mammalia</taxon>
        <taxon>Eutheria</taxon>
        <taxon>Euarchontoglires</taxon>
        <taxon>Primates</taxon>
        <taxon>Haplorrhini</taxon>
        <taxon>Catarrhini</taxon>
        <taxon>Hominidae</taxon>
        <taxon>Homo</taxon>
    </lineage>
</organism>
<evidence type="ECO:0000250" key="1"/>
<evidence type="ECO:0000255" key="2"/>
<evidence type="ECO:0000269" key="3">
    <source>
    </source>
</evidence>
<evidence type="ECO:0000269" key="4">
    <source>
    </source>
</evidence>
<evidence type="ECO:0000269" key="5">
    <source>
    </source>
</evidence>
<evidence type="ECO:0000303" key="6">
    <source>
    </source>
</evidence>
<evidence type="ECO:0000305" key="7"/>
<evidence type="ECO:0000312" key="8">
    <source>
        <dbReference type="EMBL" id="AAG39167.1"/>
    </source>
</evidence>
<evidence type="ECO:0000312" key="9">
    <source>
        <dbReference type="EMBL" id="AAH69349.1"/>
    </source>
</evidence>
<evidence type="ECO:0000312" key="10">
    <source>
        <dbReference type="EMBL" id="AAL02152.1"/>
    </source>
</evidence>
<proteinExistence type="evidence at protein level"/>
<gene>
    <name type="primary">DCSTAMP</name>
    <name type="synonym">TM7SF4</name>
</gene>
<name>DCSTP_HUMAN</name>
<protein>
    <recommendedName>
        <fullName>Dendritic cell-specific transmembrane protein</fullName>
        <shortName>DC-STAMP</shortName>
        <shortName>hDC-STAMP</shortName>
    </recommendedName>
    <alternativeName>
        <fullName>Dendrocyte-expressed seven transmembrane protein</fullName>
    </alternativeName>
    <alternativeName>
        <fullName>IL-four-induced protein</fullName>
        <shortName>FIND</shortName>
    </alternativeName>
    <alternativeName>
        <fullName>Transmembrane 7 superfamily member 4</fullName>
    </alternativeName>
</protein>
<feature type="chain" id="PRO_0000072584" description="Dendritic cell-specific transmembrane protein">
    <location>
        <begin position="1"/>
        <end position="470"/>
    </location>
</feature>
<feature type="topological domain" description="Cytoplasmic" evidence="2">
    <location>
        <begin position="1"/>
        <end position="34"/>
    </location>
</feature>
<feature type="transmembrane region" description="Helical" evidence="2">
    <location>
        <begin position="35"/>
        <end position="55"/>
    </location>
</feature>
<feature type="topological domain" description="Extracellular" evidence="2">
    <location>
        <begin position="56"/>
        <end position="57"/>
    </location>
</feature>
<feature type="transmembrane region" description="Helical" evidence="2">
    <location>
        <begin position="58"/>
        <end position="78"/>
    </location>
</feature>
<feature type="topological domain" description="Cytoplasmic" evidence="2">
    <location>
        <begin position="79"/>
        <end position="97"/>
    </location>
</feature>
<feature type="transmembrane region" description="Helical" evidence="2">
    <location>
        <begin position="98"/>
        <end position="118"/>
    </location>
</feature>
<feature type="topological domain" description="Extracellular" evidence="2">
    <location>
        <begin position="119"/>
        <end position="209"/>
    </location>
</feature>
<feature type="transmembrane region" description="Helical" evidence="2">
    <location>
        <begin position="210"/>
        <end position="230"/>
    </location>
</feature>
<feature type="topological domain" description="Cytoplasmic" evidence="2">
    <location>
        <begin position="231"/>
        <end position="292"/>
    </location>
</feature>
<feature type="transmembrane region" description="Helical" evidence="2">
    <location>
        <begin position="293"/>
        <end position="313"/>
    </location>
</feature>
<feature type="topological domain" description="Extracellular" evidence="2">
    <location>
        <begin position="314"/>
        <end position="376"/>
    </location>
</feature>
<feature type="transmembrane region" description="Helical" evidence="2">
    <location>
        <begin position="377"/>
        <end position="397"/>
    </location>
</feature>
<feature type="topological domain" description="Cytoplasmic" evidence="3">
    <location>
        <begin position="398"/>
        <end position="470"/>
    </location>
</feature>
<feature type="splice variant" id="VSP_044787" description="In isoform 2." evidence="6">
    <original>YVIIPTF</original>
    <variation>FISGFQS</variation>
    <location>
        <begin position="277"/>
        <end position="283"/>
    </location>
</feature>
<feature type="splice variant" id="VSP_044788" description="In isoform 2." evidence="6">
    <location>
        <begin position="284"/>
        <end position="470"/>
    </location>
</feature>
<feature type="sequence variant" id="VAR_051438" description="In dbSNP:rs3802204.">
    <original>D</original>
    <variation>G</variation>
    <location>
        <position position="349"/>
    </location>
</feature>
<feature type="sequence conflict" description="In Ref. 4; AAI71732." evidence="7" ref="4">
    <original>M</original>
    <variation>R</variation>
    <location>
        <position position="200"/>
    </location>
</feature>
<reference evidence="7 8" key="1">
    <citation type="journal article" date="2000" name="Eur. J. Immunol.">
        <title>DC-STAMP, a novel multimembrane-spanning molecule preferentially expressed by dendritic cells.</title>
        <authorList>
            <person name="Hartgers F.C."/>
            <person name="Vissers J.L.M."/>
            <person name="Looman M.W.G."/>
            <person name="van Zoelen C."/>
            <person name="Huffin C."/>
            <person name="Figdor C.G."/>
            <person name="Adema G.J."/>
        </authorList>
    </citation>
    <scope>NUCLEOTIDE SEQUENCE [MRNA] (ISOFORM 1)</scope>
    <scope>SUBCELLULAR LOCATION</scope>
    <scope>TOPOLOGY</scope>
    <scope>TISSUE SPECIFICITY</scope>
    <scope>DEVELOPMENTAL STAGE</scope>
    <scope>INDUCTION</scope>
    <source>
        <tissue evidence="8">Dendritic cell</tissue>
    </source>
</reference>
<reference evidence="7 10" key="2">
    <citation type="journal article" date="2001" name="Immunogenetics">
        <title>Two novel genes FIND and LIND differentially expressed in deactivated and Listeria-infected human macrophages.</title>
        <authorList>
            <person name="Staege H."/>
            <person name="Brauchlin A."/>
            <person name="Schoedon G."/>
            <person name="Schaffner A."/>
        </authorList>
    </citation>
    <scope>NUCLEOTIDE SEQUENCE [MRNA] (ISOFORM 1)</scope>
    <scope>TISSUE SPECIFICITY</scope>
    <scope>INDUCTION</scope>
    <source>
        <tissue evidence="4">Macrophage</tissue>
        <tissue>Monocyte</tissue>
    </source>
</reference>
<reference key="3">
    <citation type="journal article" date="2006" name="Nature">
        <title>DNA sequence and analysis of human chromosome 8.</title>
        <authorList>
            <person name="Nusbaum C."/>
            <person name="Mikkelsen T.S."/>
            <person name="Zody M.C."/>
            <person name="Asakawa S."/>
            <person name="Taudien S."/>
            <person name="Garber M."/>
            <person name="Kodira C.D."/>
            <person name="Schueler M.G."/>
            <person name="Shimizu A."/>
            <person name="Whittaker C.A."/>
            <person name="Chang J.L."/>
            <person name="Cuomo C.A."/>
            <person name="Dewar K."/>
            <person name="FitzGerald M.G."/>
            <person name="Yang X."/>
            <person name="Allen N.R."/>
            <person name="Anderson S."/>
            <person name="Asakawa T."/>
            <person name="Blechschmidt K."/>
            <person name="Bloom T."/>
            <person name="Borowsky M.L."/>
            <person name="Butler J."/>
            <person name="Cook A."/>
            <person name="Corum B."/>
            <person name="DeArellano K."/>
            <person name="DeCaprio D."/>
            <person name="Dooley K.T."/>
            <person name="Dorris L. III"/>
            <person name="Engels R."/>
            <person name="Gloeckner G."/>
            <person name="Hafez N."/>
            <person name="Hagopian D.S."/>
            <person name="Hall J.L."/>
            <person name="Ishikawa S.K."/>
            <person name="Jaffe D.B."/>
            <person name="Kamat A."/>
            <person name="Kudoh J."/>
            <person name="Lehmann R."/>
            <person name="Lokitsang T."/>
            <person name="Macdonald P."/>
            <person name="Major J.E."/>
            <person name="Matthews C.D."/>
            <person name="Mauceli E."/>
            <person name="Menzel U."/>
            <person name="Mihalev A.H."/>
            <person name="Minoshima S."/>
            <person name="Murayama Y."/>
            <person name="Naylor J.W."/>
            <person name="Nicol R."/>
            <person name="Nguyen C."/>
            <person name="O'Leary S.B."/>
            <person name="O'Neill K."/>
            <person name="Parker S.C.J."/>
            <person name="Polley A."/>
            <person name="Raymond C.K."/>
            <person name="Reichwald K."/>
            <person name="Rodriguez J."/>
            <person name="Sasaki T."/>
            <person name="Schilhabel M."/>
            <person name="Siddiqui R."/>
            <person name="Smith C.L."/>
            <person name="Sneddon T.P."/>
            <person name="Talamas J.A."/>
            <person name="Tenzin P."/>
            <person name="Topham K."/>
            <person name="Venkataraman V."/>
            <person name="Wen G."/>
            <person name="Yamazaki S."/>
            <person name="Young S.K."/>
            <person name="Zeng Q."/>
            <person name="Zimmer A.R."/>
            <person name="Rosenthal A."/>
            <person name="Birren B.W."/>
            <person name="Platzer M."/>
            <person name="Shimizu N."/>
            <person name="Lander E.S."/>
        </authorList>
    </citation>
    <scope>NUCLEOTIDE SEQUENCE [LARGE SCALE GENOMIC DNA]</scope>
</reference>
<reference evidence="9" key="4">
    <citation type="journal article" date="2004" name="Genome Res.">
        <title>The status, quality, and expansion of the NIH full-length cDNA project: the Mammalian Gene Collection (MGC).</title>
        <authorList>
            <consortium name="The MGC Project Team"/>
        </authorList>
    </citation>
    <scope>NUCLEOTIDE SEQUENCE [LARGE SCALE MRNA] (ISOFORMS 1 AND 2)</scope>
</reference>
<reference key="5">
    <citation type="journal article" date="2005" name="J. Leukoc. Biol.">
        <title>The dendritic cell-derived protein DC-STAMP is highly conserved and localizes to the endoplasmic reticulum.</title>
        <authorList>
            <person name="Eleveld-Trancikova D."/>
            <person name="Triantis V."/>
            <person name="Moulin V."/>
            <person name="Looman M.W."/>
            <person name="Wijers M."/>
            <person name="Fransen J.A."/>
            <person name="Lemckert A.A."/>
            <person name="Havenga M.J."/>
            <person name="Figdor C.G."/>
            <person name="Janssen R.A."/>
            <person name="Adema G.J."/>
        </authorList>
    </citation>
    <scope>SUBCELLULAR LOCATION</scope>
</reference>
<reference key="6">
    <citation type="journal article" date="2010" name="Mol. Immunol.">
        <title>DC-STAMP interacts with ER-resident transcription factor LUMAN which becomes activated during DC maturation.</title>
        <authorList>
            <person name="Eleveld-Trancikova D."/>
            <person name="Sanecka A."/>
            <person name="van Hout-Kuijer M.A."/>
            <person name="Looman M.W."/>
            <person name="Hendriks I.A."/>
            <person name="Jansen B.J."/>
            <person name="Adema G.J."/>
        </authorList>
    </citation>
    <scope>INTERACTION WITH CREB3</scope>
</reference>
<sequence length="470" mass="53393">MGIWTSGTDIFLSLWEIYVSPRSPGWMDFIQHLGVCCLVALISVGLLSVAACWFLPSIIAAAASWIITCVLLCCSKHARCFILLVFLSCGLREGRNALIAAGTGIVILGHVENIFHNFKGLLDGMTCNLRAKSFSIHFPLLKKYIEAIQWIYGLATPLSVFDDLVSWNQTLAVSLFSPSHVLEAQLNDSKGEVLSVLYQMATTTEVLSSLGQKLLAFAGLSLVLLGTGLFMKRFLGPCGWKYENIYITRQFVQFDERERHQQRPCVLPLNKEERRKYVIIPTFWPTPKERKNLGLFFLPILIHLCIWVLFAAVDYLLYRLIFSVSKQFQSLPGFEVHLKLHGEKQGTQDIIHDSSFNISVFEPNCIPKPKFLLSETWVPLSVILLILVMLGLLSSILMQLKILVSASFYPSVERKRIQYLHAKLLKKRSKQPLGEVKRRLSLYLTKIHFWLPVLKMIRKKQMDMASADKS</sequence>
<accession>Q9H295</accession>
<accession>B7ZVW2</accession>
<accession>E7ESG0</accession>
<accession>Q2M2D5</accession>
<comment type="function">
    <text>Probable cell surface receptor that plays several roles in cellular fusion, cell differentiation, bone and immune homeostasis. Plays a role in TNFSF11-mediated osteoclastogenesis. Cooperates with OCSTAMP in modulating cell-cell fusion in both osteoclasts and foreign body giant cells (FBGCs). Participates in osteoclast bone resorption. Involved in inducing the expression of tartrate-resistant acid phosphatase in osteoclast precursors. Plays a role in haematopoietic stem cell differentiation of bone marrow cells toward the myeloid lineage. Inhibits the development of neutrophilic granulocytes. Plays also a role in the regulation of dendritic cell (DC) antigen presentation activity by controlling phagocytic activity. Involved in the maintenance of immune self-tolerance and avoidance of autoimmune reactions.</text>
</comment>
<comment type="subunit">
    <text evidence="1 5">Monomer. Homodimer. Isoform 1 interacts (via the C-terminus cytoplasmic tail) with OS9 isoform 1 (via the C-terminus tail); the interaction induces DCSTAMP redistribution to the endoplasmic reticulum-Golgi intermediate compartment. Isoform 1 interacts (via the C-terminus cytoplasmic tail) with OS9 isoform 2 (via the C-terminus tail) (By similarity). Interacts with CREB3.</text>
</comment>
<comment type="interaction">
    <interactant intactId="EBI-6095316">
        <id>Q9H295</id>
    </interactant>
    <interactant intactId="EBI-625022">
        <id>O43889-2</id>
        <label>CREB3</label>
    </interactant>
    <organismsDiffer>false</organismsDiffer>
    <experiments>6</experiments>
</comment>
<comment type="subcellular location">
    <subcellularLocation>
        <location evidence="1">Cell membrane</location>
        <topology evidence="1">Multi-pass membrane protein</topology>
    </subcellularLocation>
    <subcellularLocation>
        <location>Endoplasmic reticulum membrane</location>
        <topology>Multi-pass membrane protein</topology>
    </subcellularLocation>
    <subcellularLocation>
        <location evidence="1">Endoplasmic reticulum-Golgi intermediate compartment membrane</location>
        <topology evidence="1">Multi-pass membrane protein</topology>
    </subcellularLocation>
    <subcellularLocation>
        <location evidence="1">Endosome</location>
    </subcellularLocation>
    <text evidence="1">Localizes to the cell surface in osteoclasts and undifferentiated monocytes. Intracellular internalized DCSTAMP is detected in a fraction of RANKL-induced osteoclast precursor. Colocalizes with OS9 in the endoplasmic reticulum (ER) of immature dendritic cell (DC). Translocates from the endoplasmic reticulum to the intermediate/Golgi compartment upon maturation of DC in a OS9-dependent manner. Colocalizes with LAMP1 in endosomes (By similarity).</text>
</comment>
<comment type="alternative products">
    <event type="alternative splicing"/>
    <isoform>
        <id>Q9H295-1</id>
        <name>1</name>
        <sequence type="displayed"/>
    </isoform>
    <isoform>
        <id>Q9H295-2</id>
        <name>2</name>
        <sequence type="described" ref="VSP_044787 VSP_044788"/>
    </isoform>
</comment>
<comment type="tissue specificity">
    <text evidence="3 4">Preferentially expressed by dendritic cells (DCs). Detected in both immature and mature DCs. Highly expressed in lymph nodes, lung, kidney and liver. Expressed at lower levels in pancreas, bone marrow, spleen, leukocytes, in freshly isolated peripheral blood mononuclear cells (PBMC) and B-cells. Not expressed in freshly isolated monocytes.</text>
</comment>
<comment type="developmental stage">
    <text evidence="3">Constitutively expressed in dendritic cells from day 3-8 in culture.</text>
</comment>
<comment type="induction">
    <text evidence="3 4">Expression is down-regulated by dexamethasone and up-regulated by IL4/interleukin-4 in macrophages. Down-regulated in CD40L-activated dendritic cells.</text>
</comment>
<comment type="domain">
    <text evidence="1">Several domains are necessary for interacting with OS9. The region in the cytoplasmic tail that is necessary for interaction with OS9, is also required for its transport (By similarity).</text>
</comment>
<comment type="PTM">
    <text evidence="1">Glycosylated.</text>
</comment>
<dbReference type="EMBL" id="AF305068">
    <property type="protein sequence ID" value="AAG39167.1"/>
    <property type="molecule type" value="mRNA"/>
</dbReference>
<dbReference type="EMBL" id="AF277290">
    <property type="protein sequence ID" value="AAL02152.1"/>
    <property type="molecule type" value="mRNA"/>
</dbReference>
<dbReference type="EMBL" id="AP003471">
    <property type="status" value="NOT_ANNOTATED_CDS"/>
    <property type="molecule type" value="Genomic_DNA"/>
</dbReference>
<dbReference type="EMBL" id="BC069349">
    <property type="protein sequence ID" value="AAH69349.1"/>
    <property type="molecule type" value="mRNA"/>
</dbReference>
<dbReference type="EMBL" id="BC112018">
    <property type="protein sequence ID" value="AAI12019.1"/>
    <property type="molecule type" value="mRNA"/>
</dbReference>
<dbReference type="EMBL" id="BC112020">
    <property type="protein sequence ID" value="AAI12021.1"/>
    <property type="molecule type" value="mRNA"/>
</dbReference>
<dbReference type="EMBL" id="BC171732">
    <property type="protein sequence ID" value="AAI71732.1"/>
    <property type="molecule type" value="mRNA"/>
</dbReference>
<dbReference type="CCDS" id="CCDS59111.1">
    <molecule id="Q9H295-2"/>
</dbReference>
<dbReference type="CCDS" id="CCDS6301.1">
    <molecule id="Q9H295-1"/>
</dbReference>
<dbReference type="RefSeq" id="NP_001244246.1">
    <molecule id="Q9H295-2"/>
    <property type="nucleotide sequence ID" value="NM_001257317.1"/>
</dbReference>
<dbReference type="RefSeq" id="NP_110415.1">
    <molecule id="Q9H295-1"/>
    <property type="nucleotide sequence ID" value="NM_030788.4"/>
</dbReference>
<dbReference type="RefSeq" id="XP_011515623.1">
    <property type="nucleotide sequence ID" value="XM_011517321.1"/>
</dbReference>
<dbReference type="RefSeq" id="XP_011515626.1">
    <property type="nucleotide sequence ID" value="XM_011517324.1"/>
</dbReference>
<dbReference type="RefSeq" id="XP_016869367.1">
    <property type="nucleotide sequence ID" value="XM_017013878.1"/>
</dbReference>
<dbReference type="RefSeq" id="XP_016869369.1">
    <property type="nucleotide sequence ID" value="XM_017013880.1"/>
</dbReference>
<dbReference type="RefSeq" id="XP_024303056.1">
    <molecule id="Q9H295-1"/>
    <property type="nucleotide sequence ID" value="XM_024447288.2"/>
</dbReference>
<dbReference type="RefSeq" id="XP_054217274.1">
    <molecule id="Q9H295-1"/>
    <property type="nucleotide sequence ID" value="XM_054361299.1"/>
</dbReference>
<dbReference type="RefSeq" id="XP_054217275.1">
    <molecule id="Q9H295-1"/>
    <property type="nucleotide sequence ID" value="XM_054361300.1"/>
</dbReference>
<dbReference type="RefSeq" id="XP_054217276.1">
    <molecule id="Q9H295-1"/>
    <property type="nucleotide sequence ID" value="XM_054361301.1"/>
</dbReference>
<dbReference type="RefSeq" id="XP_054217279.1">
    <molecule id="Q9H295-2"/>
    <property type="nucleotide sequence ID" value="XM_054361304.1"/>
</dbReference>
<dbReference type="BioGRID" id="123504">
    <property type="interactions" value="1"/>
</dbReference>
<dbReference type="FunCoup" id="Q9H295">
    <property type="interactions" value="41"/>
</dbReference>
<dbReference type="IntAct" id="Q9H295">
    <property type="interactions" value="1"/>
</dbReference>
<dbReference type="STRING" id="9606.ENSP00000297581"/>
<dbReference type="TCDB" id="1.N.1.1.1">
    <property type="family name" value="the osteoclast fusion complex (ofc) family"/>
</dbReference>
<dbReference type="iPTMnet" id="Q9H295"/>
<dbReference type="PhosphoSitePlus" id="Q9H295"/>
<dbReference type="BioMuta" id="DCSTAMP"/>
<dbReference type="DMDM" id="71153342"/>
<dbReference type="PaxDb" id="9606-ENSP00000297581"/>
<dbReference type="PeptideAtlas" id="Q9H295"/>
<dbReference type="ProteomicsDB" id="17984"/>
<dbReference type="ProteomicsDB" id="80513">
    <molecule id="Q9H295-1"/>
</dbReference>
<dbReference type="Antibodypedia" id="42882">
    <property type="antibodies" value="84 antibodies from 18 providers"/>
</dbReference>
<dbReference type="DNASU" id="81501"/>
<dbReference type="Ensembl" id="ENST00000297581.2">
    <molecule id="Q9H295-1"/>
    <property type="protein sequence ID" value="ENSP00000297581.2"/>
    <property type="gene ID" value="ENSG00000164935.6"/>
</dbReference>
<dbReference type="Ensembl" id="ENST00000517991.5">
    <molecule id="Q9H295-2"/>
    <property type="protein sequence ID" value="ENSP00000428869.1"/>
    <property type="gene ID" value="ENSG00000164935.6"/>
</dbReference>
<dbReference type="Ensembl" id="ENST00000622554.1">
    <molecule id="Q9H295-2"/>
    <property type="protein sequence ID" value="ENSP00000480546.1"/>
    <property type="gene ID" value="ENSG00000164935.6"/>
</dbReference>
<dbReference type="GeneID" id="81501"/>
<dbReference type="KEGG" id="hsa:81501"/>
<dbReference type="MANE-Select" id="ENST00000297581.2">
    <property type="protein sequence ID" value="ENSP00000297581.2"/>
    <property type="RefSeq nucleotide sequence ID" value="NM_030788.4"/>
    <property type="RefSeq protein sequence ID" value="NP_110415.1"/>
</dbReference>
<dbReference type="UCSC" id="uc003ylx.3">
    <molecule id="Q9H295-1"/>
    <property type="organism name" value="human"/>
</dbReference>
<dbReference type="AGR" id="HGNC:18549"/>
<dbReference type="CTD" id="81501"/>
<dbReference type="DisGeNET" id="81501"/>
<dbReference type="GeneCards" id="DCSTAMP"/>
<dbReference type="HGNC" id="HGNC:18549">
    <property type="gene designation" value="DCSTAMP"/>
</dbReference>
<dbReference type="HPA" id="ENSG00000164935">
    <property type="expression patterns" value="Tissue enhanced (epididymis, lung)"/>
</dbReference>
<dbReference type="MIM" id="605933">
    <property type="type" value="gene"/>
</dbReference>
<dbReference type="neXtProt" id="NX_Q9H295"/>
<dbReference type="OpenTargets" id="ENSG00000164935"/>
<dbReference type="PharmGKB" id="PA134938623"/>
<dbReference type="VEuPathDB" id="HostDB:ENSG00000164935"/>
<dbReference type="eggNOG" id="ENOG502QWDQ">
    <property type="taxonomic scope" value="Eukaryota"/>
</dbReference>
<dbReference type="GeneTree" id="ENSGT00940000153269"/>
<dbReference type="HOGENOM" id="CLU_046145_0_0_1"/>
<dbReference type="InParanoid" id="Q9H295"/>
<dbReference type="OMA" id="CFKHLRC"/>
<dbReference type="OrthoDB" id="9949280at2759"/>
<dbReference type="PAN-GO" id="Q9H295">
    <property type="GO annotations" value="2 GO annotations based on evolutionary models"/>
</dbReference>
<dbReference type="PhylomeDB" id="Q9H295"/>
<dbReference type="TreeFam" id="TF318254"/>
<dbReference type="PathwayCommons" id="Q9H295"/>
<dbReference type="Reactome" id="R-HSA-8874211">
    <property type="pathway name" value="CREB3 factors activate genes"/>
</dbReference>
<dbReference type="SignaLink" id="Q9H295"/>
<dbReference type="BioGRID-ORCS" id="81501">
    <property type="hits" value="7 hits in 1141 CRISPR screens"/>
</dbReference>
<dbReference type="GenomeRNAi" id="81501"/>
<dbReference type="Pharos" id="Q9H295">
    <property type="development level" value="Tbio"/>
</dbReference>
<dbReference type="PRO" id="PR:Q9H295"/>
<dbReference type="Proteomes" id="UP000005640">
    <property type="component" value="Chromosome 8"/>
</dbReference>
<dbReference type="RNAct" id="Q9H295">
    <property type="molecule type" value="protein"/>
</dbReference>
<dbReference type="Bgee" id="ENSG00000164935">
    <property type="expression patterns" value="Expressed in stromal cell of endometrium and 104 other cell types or tissues"/>
</dbReference>
<dbReference type="GO" id="GO:0009986">
    <property type="term" value="C:cell surface"/>
    <property type="evidence" value="ECO:0000314"/>
    <property type="project" value="UniProtKB"/>
</dbReference>
<dbReference type="GO" id="GO:0005789">
    <property type="term" value="C:endoplasmic reticulum membrane"/>
    <property type="evidence" value="ECO:0000314"/>
    <property type="project" value="UniProtKB"/>
</dbReference>
<dbReference type="GO" id="GO:0033116">
    <property type="term" value="C:endoplasmic reticulum-Golgi intermediate compartment membrane"/>
    <property type="evidence" value="ECO:0007669"/>
    <property type="project" value="UniProtKB-SubCell"/>
</dbReference>
<dbReference type="GO" id="GO:0010008">
    <property type="term" value="C:endosome membrane"/>
    <property type="evidence" value="ECO:0000250"/>
    <property type="project" value="UniProtKB"/>
</dbReference>
<dbReference type="GO" id="GO:0016020">
    <property type="term" value="C:membrane"/>
    <property type="evidence" value="ECO:0000303"/>
    <property type="project" value="UniProtKB"/>
</dbReference>
<dbReference type="GO" id="GO:0005886">
    <property type="term" value="C:plasma membrane"/>
    <property type="evidence" value="ECO:0007669"/>
    <property type="project" value="UniProtKB-SubCell"/>
</dbReference>
<dbReference type="GO" id="GO:0071353">
    <property type="term" value="P:cellular response to interleukin-4"/>
    <property type="evidence" value="ECO:0000314"/>
    <property type="project" value="UniProtKB"/>
</dbReference>
<dbReference type="GO" id="GO:0036006">
    <property type="term" value="P:cellular response to macrophage colony-stimulating factor stimulus"/>
    <property type="evidence" value="ECO:0000250"/>
    <property type="project" value="UniProtKB"/>
</dbReference>
<dbReference type="GO" id="GO:0071356">
    <property type="term" value="P:cellular response to tumor necrosis factor"/>
    <property type="evidence" value="ECO:0000250"/>
    <property type="project" value="UniProtKB"/>
</dbReference>
<dbReference type="GO" id="GO:0061025">
    <property type="term" value="P:membrane fusion"/>
    <property type="evidence" value="ECO:0000250"/>
    <property type="project" value="UniProtKB"/>
</dbReference>
<dbReference type="GO" id="GO:0043011">
    <property type="term" value="P:myeloid dendritic cell differentiation"/>
    <property type="evidence" value="ECO:0000250"/>
    <property type="project" value="UniProtKB"/>
</dbReference>
<dbReference type="GO" id="GO:0030308">
    <property type="term" value="P:negative regulation of cell growth"/>
    <property type="evidence" value="ECO:0000250"/>
    <property type="project" value="UniProtKB"/>
</dbReference>
<dbReference type="GO" id="GO:0030316">
    <property type="term" value="P:osteoclast differentiation"/>
    <property type="evidence" value="ECO:0000250"/>
    <property type="project" value="UniProtKB"/>
</dbReference>
<dbReference type="GO" id="GO:0072675">
    <property type="term" value="P:osteoclast fusion"/>
    <property type="evidence" value="ECO:0000250"/>
    <property type="project" value="UniProtKB"/>
</dbReference>
<dbReference type="GO" id="GO:0045780">
    <property type="term" value="P:positive regulation of bone resorption"/>
    <property type="evidence" value="ECO:0000250"/>
    <property type="project" value="UniProtKB"/>
</dbReference>
<dbReference type="GO" id="GO:0034241">
    <property type="term" value="P:positive regulation of macrophage fusion"/>
    <property type="evidence" value="ECO:0000250"/>
    <property type="project" value="UniProtKB"/>
</dbReference>
<dbReference type="GO" id="GO:0045657">
    <property type="term" value="P:positive regulation of monocyte differentiation"/>
    <property type="evidence" value="ECO:0000250"/>
    <property type="project" value="UniProtKB"/>
</dbReference>
<dbReference type="InterPro" id="IPR051856">
    <property type="entry name" value="CSR-E3_Ligase_Protein"/>
</dbReference>
<dbReference type="InterPro" id="IPR012858">
    <property type="entry name" value="DC_STAMP-like"/>
</dbReference>
<dbReference type="PANTHER" id="PTHR21041">
    <property type="entry name" value="DENDRITIC CELL-SPECIFIC TRANSMEMBRANE PROTEIN"/>
    <property type="match status" value="1"/>
</dbReference>
<dbReference type="PANTHER" id="PTHR21041:SF2">
    <property type="entry name" value="DENDRITIC CELL-SPECIFIC TRANSMEMBRANE PROTEIN"/>
    <property type="match status" value="1"/>
</dbReference>
<dbReference type="Pfam" id="PF07782">
    <property type="entry name" value="DC_STAMP"/>
    <property type="match status" value="1"/>
</dbReference>
<keyword id="KW-0025">Alternative splicing</keyword>
<keyword id="KW-1003">Cell membrane</keyword>
<keyword id="KW-0221">Differentiation</keyword>
<keyword id="KW-0256">Endoplasmic reticulum</keyword>
<keyword id="KW-0967">Endosome</keyword>
<keyword id="KW-0391">Immunity</keyword>
<keyword id="KW-0472">Membrane</keyword>
<keyword id="KW-1185">Reference proteome</keyword>
<keyword id="KW-0812">Transmembrane</keyword>
<keyword id="KW-1133">Transmembrane helix</keyword>